<comment type="function">
    <text evidence="1">F(1)F(0) ATP synthase produces ATP from ADP in the presence of a proton or sodium gradient. F-type ATPases consist of two structural domains, F(1) containing the extramembraneous catalytic core and F(0) containing the membrane proton channel, linked together by a central stalk and a peripheral stalk. During catalysis, ATP synthesis in the catalytic domain of F(1) is coupled via a rotary mechanism of the central stalk subunits to proton translocation.</text>
</comment>
<comment type="function">
    <text evidence="1">Component of the F(0) channel, it forms part of the peripheral stalk, linking F(1) to F(0).</text>
</comment>
<comment type="subunit">
    <text evidence="1">F-type ATPases have 2 components, F(1) - the catalytic core - and F(0) - the membrane proton channel. F(1) has five subunits: alpha(3), beta(3), gamma(1), delta(1), epsilon(1). F(0) has four main subunits: a(1), b(1), b'(1) and c(10-14). The alpha and beta chains form an alternating ring which encloses part of the gamma chain. F(1) is attached to F(0) by a central stalk formed by the gamma and epsilon chains, while a peripheral stalk is formed by the delta, b and b' chains.</text>
</comment>
<comment type="subcellular location">
    <subcellularLocation>
        <location evidence="1">Cellular thylakoid membrane</location>
        <topology evidence="1">Single-pass membrane protein</topology>
    </subcellularLocation>
</comment>
<comment type="similarity">
    <text evidence="1">Belongs to the ATPase B chain family.</text>
</comment>
<proteinExistence type="inferred from homology"/>
<name>ATPF_SYNY3</name>
<keyword id="KW-0066">ATP synthesis</keyword>
<keyword id="KW-0138">CF(0)</keyword>
<keyword id="KW-0375">Hydrogen ion transport</keyword>
<keyword id="KW-0406">Ion transport</keyword>
<keyword id="KW-0472">Membrane</keyword>
<keyword id="KW-1185">Reference proteome</keyword>
<keyword id="KW-0793">Thylakoid</keyword>
<keyword id="KW-0812">Transmembrane</keyword>
<keyword id="KW-1133">Transmembrane helix</keyword>
<keyword id="KW-0813">Transport</keyword>
<feature type="chain" id="PRO_0000082393" description="ATP synthase subunit b">
    <location>
        <begin position="1"/>
        <end position="179"/>
    </location>
</feature>
<feature type="transmembrane region" description="Helical" evidence="1">
    <location>
        <begin position="26"/>
        <end position="46"/>
    </location>
</feature>
<feature type="sequence conflict" description="In Ref. 1; CAA41133." evidence="2" ref="1">
    <original>MQ</original>
    <variation>IE</variation>
    <location>
        <begin position="121"/>
        <end position="122"/>
    </location>
</feature>
<sequence length="179" mass="19804">MLNTLFILAAEAHEAGEGGFGINLDFLEANLFNLAILLGIIIYYAPKTLGKILGDRRQKIADAIEEAETRQRKSAQILAEEEKKLAQAKAEAARIVQEAGQRAEVAKQEIATQTEADLRRMQEAAAQDLGAEQERVIAELKRRIAEQAVAKAEADLRDRLNEDTQDRLIERSIAQLGGR</sequence>
<evidence type="ECO:0000255" key="1">
    <source>
        <dbReference type="HAMAP-Rule" id="MF_01398"/>
    </source>
</evidence>
<evidence type="ECO:0000305" key="2"/>
<dbReference type="EMBL" id="X58128">
    <property type="protein sequence ID" value="CAA41133.1"/>
    <property type="molecule type" value="Genomic_DNA"/>
</dbReference>
<dbReference type="EMBL" id="BA000022">
    <property type="protein sequence ID" value="BAA16737.1"/>
    <property type="molecule type" value="Genomic_DNA"/>
</dbReference>
<dbReference type="PIR" id="S74585">
    <property type="entry name" value="PWYBBB"/>
</dbReference>
<dbReference type="SMR" id="P27181"/>
<dbReference type="IntAct" id="P27181">
    <property type="interactions" value="4"/>
</dbReference>
<dbReference type="STRING" id="1148.gene:10497592"/>
<dbReference type="PaxDb" id="1148-1651810"/>
<dbReference type="EnsemblBacteria" id="BAA16737">
    <property type="protein sequence ID" value="BAA16737"/>
    <property type="gene ID" value="BAA16737"/>
</dbReference>
<dbReference type="KEGG" id="syn:sll1324"/>
<dbReference type="eggNOG" id="COG0711">
    <property type="taxonomic scope" value="Bacteria"/>
</dbReference>
<dbReference type="InParanoid" id="P27181"/>
<dbReference type="PhylomeDB" id="P27181"/>
<dbReference type="Proteomes" id="UP000001425">
    <property type="component" value="Chromosome"/>
</dbReference>
<dbReference type="GO" id="GO:0005886">
    <property type="term" value="C:plasma membrane"/>
    <property type="evidence" value="ECO:0000314"/>
    <property type="project" value="UniProtKB"/>
</dbReference>
<dbReference type="GO" id="GO:0031676">
    <property type="term" value="C:plasma membrane-derived thylakoid membrane"/>
    <property type="evidence" value="ECO:0007669"/>
    <property type="project" value="UniProtKB-SubCell"/>
</dbReference>
<dbReference type="GO" id="GO:0045259">
    <property type="term" value="C:proton-transporting ATP synthase complex"/>
    <property type="evidence" value="ECO:0000314"/>
    <property type="project" value="UniProtKB"/>
</dbReference>
<dbReference type="GO" id="GO:0046933">
    <property type="term" value="F:proton-transporting ATP synthase activity, rotational mechanism"/>
    <property type="evidence" value="ECO:0007669"/>
    <property type="project" value="UniProtKB-UniRule"/>
</dbReference>
<dbReference type="CDD" id="cd06503">
    <property type="entry name" value="ATP-synt_Fo_b"/>
    <property type="match status" value="1"/>
</dbReference>
<dbReference type="HAMAP" id="MF_01398">
    <property type="entry name" value="ATP_synth_b_bprime"/>
    <property type="match status" value="1"/>
</dbReference>
<dbReference type="InterPro" id="IPR028987">
    <property type="entry name" value="ATP_synth_B-like_membr_sf"/>
</dbReference>
<dbReference type="InterPro" id="IPR002146">
    <property type="entry name" value="ATP_synth_b/b'su_bac/chlpt"/>
</dbReference>
<dbReference type="InterPro" id="IPR005864">
    <property type="entry name" value="ATP_synth_F0_bsu_bac"/>
</dbReference>
<dbReference type="NCBIfam" id="TIGR01144">
    <property type="entry name" value="ATP_synt_b"/>
    <property type="match status" value="1"/>
</dbReference>
<dbReference type="NCBIfam" id="NF005606">
    <property type="entry name" value="PRK07352.1"/>
    <property type="match status" value="1"/>
</dbReference>
<dbReference type="PANTHER" id="PTHR34264">
    <property type="entry name" value="ATP SYNTHASE SUBUNIT B, CHLOROPLASTIC"/>
    <property type="match status" value="1"/>
</dbReference>
<dbReference type="PANTHER" id="PTHR34264:SF3">
    <property type="entry name" value="ATP SYNTHASE SUBUNIT B, CHLOROPLASTIC"/>
    <property type="match status" value="1"/>
</dbReference>
<dbReference type="Pfam" id="PF00430">
    <property type="entry name" value="ATP-synt_B"/>
    <property type="match status" value="1"/>
</dbReference>
<dbReference type="SUPFAM" id="SSF81573">
    <property type="entry name" value="F1F0 ATP synthase subunit B, membrane domain"/>
    <property type="match status" value="1"/>
</dbReference>
<protein>
    <recommendedName>
        <fullName evidence="1">ATP synthase subunit b</fullName>
    </recommendedName>
    <alternativeName>
        <fullName evidence="1">ATP synthase F(0) sector subunit b</fullName>
    </alternativeName>
    <alternativeName>
        <fullName evidence="1">ATPase subunit I</fullName>
    </alternativeName>
    <alternativeName>
        <fullName evidence="1">F-type ATPase subunit b</fullName>
        <shortName evidence="1">F-ATPase subunit b</shortName>
    </alternativeName>
</protein>
<reference key="1">
    <citation type="journal article" date="1991" name="Plant Mol. Biol.">
        <title>The atp1 and atp2 operons of the cyanobacterium Synechocystis sp. PCC 6803.</title>
        <authorList>
            <person name="Lill H."/>
            <person name="Nelson N."/>
        </authorList>
    </citation>
    <scope>NUCLEOTIDE SEQUENCE [GENOMIC DNA]</scope>
</reference>
<reference key="2">
    <citation type="journal article" date="1996" name="DNA Res.">
        <title>Sequence analysis of the genome of the unicellular cyanobacterium Synechocystis sp. strain PCC6803. II. Sequence determination of the entire genome and assignment of potential protein-coding regions.</title>
        <authorList>
            <person name="Kaneko T."/>
            <person name="Sato S."/>
            <person name="Kotani H."/>
            <person name="Tanaka A."/>
            <person name="Asamizu E."/>
            <person name="Nakamura Y."/>
            <person name="Miyajima N."/>
            <person name="Hirosawa M."/>
            <person name="Sugiura M."/>
            <person name="Sasamoto S."/>
            <person name="Kimura T."/>
            <person name="Hosouchi T."/>
            <person name="Matsuno A."/>
            <person name="Muraki A."/>
            <person name="Nakazaki N."/>
            <person name="Naruo K."/>
            <person name="Okumura S."/>
            <person name="Shimpo S."/>
            <person name="Takeuchi C."/>
            <person name="Wada T."/>
            <person name="Watanabe A."/>
            <person name="Yamada M."/>
            <person name="Yasuda M."/>
            <person name="Tabata S."/>
        </authorList>
    </citation>
    <scope>NUCLEOTIDE SEQUENCE [LARGE SCALE GENOMIC DNA]</scope>
    <source>
        <strain>ATCC 27184 / PCC 6803 / Kazusa</strain>
    </source>
</reference>
<gene>
    <name evidence="1" type="primary">atpF</name>
    <name type="ordered locus">sll1324</name>
</gene>
<accession>P27181</accession>
<accession>P72726</accession>
<organism>
    <name type="scientific">Synechocystis sp. (strain ATCC 27184 / PCC 6803 / Kazusa)</name>
    <dbReference type="NCBI Taxonomy" id="1111708"/>
    <lineage>
        <taxon>Bacteria</taxon>
        <taxon>Bacillati</taxon>
        <taxon>Cyanobacteriota</taxon>
        <taxon>Cyanophyceae</taxon>
        <taxon>Synechococcales</taxon>
        <taxon>Merismopediaceae</taxon>
        <taxon>Synechocystis</taxon>
    </lineage>
</organism>